<comment type="subcellular location">
    <subcellularLocation>
        <location>Cell inner membrane</location>
        <topology>Multi-pass membrane protein</topology>
    </subcellularLocation>
</comment>
<comment type="similarity">
    <text evidence="2">Belongs to the UPF0126 family.</text>
</comment>
<comment type="sequence caution" evidence="2">
    <conflict type="erroneous initiation">
        <sequence resource="EMBL-CDS" id="AAA61999"/>
    </conflict>
    <text>Extended N-terminus.</text>
</comment>
<reference key="1">
    <citation type="journal article" date="1993" name="Genomics">
        <title>DNA sequence and analysis of 136 kilobases of the Escherichia coli genome: organizational symmetry around the origin of replication.</title>
        <authorList>
            <person name="Burland V.D."/>
            <person name="Plunkett G. III"/>
            <person name="Daniels D.L."/>
            <person name="Blattner F.R."/>
        </authorList>
    </citation>
    <scope>NUCLEOTIDE SEQUENCE [LARGE SCALE GENOMIC DNA]</scope>
    <source>
        <strain>K12 / MG1655 / ATCC 47076</strain>
    </source>
</reference>
<reference key="2">
    <citation type="journal article" date="1997" name="Science">
        <title>The complete genome sequence of Escherichia coli K-12.</title>
        <authorList>
            <person name="Blattner F.R."/>
            <person name="Plunkett G. III"/>
            <person name="Bloch C.A."/>
            <person name="Perna N.T."/>
            <person name="Burland V."/>
            <person name="Riley M."/>
            <person name="Collado-Vides J."/>
            <person name="Glasner J.D."/>
            <person name="Rode C.K."/>
            <person name="Mayhew G.F."/>
            <person name="Gregor J."/>
            <person name="Davis N.W."/>
            <person name="Kirkpatrick H.A."/>
            <person name="Goeden M.A."/>
            <person name="Rose D.J."/>
            <person name="Mau B."/>
            <person name="Shao Y."/>
        </authorList>
    </citation>
    <scope>NUCLEOTIDE SEQUENCE [LARGE SCALE GENOMIC DNA]</scope>
    <source>
        <strain>K12 / MG1655 / ATCC 47076</strain>
    </source>
</reference>
<reference key="3">
    <citation type="journal article" date="2006" name="Mol. Syst. Biol.">
        <title>Highly accurate genome sequences of Escherichia coli K-12 strains MG1655 and W3110.</title>
        <authorList>
            <person name="Hayashi K."/>
            <person name="Morooka N."/>
            <person name="Yamamoto Y."/>
            <person name="Fujita K."/>
            <person name="Isono K."/>
            <person name="Choi S."/>
            <person name="Ohtsubo E."/>
            <person name="Baba T."/>
            <person name="Wanner B.L."/>
            <person name="Mori H."/>
            <person name="Horiuchi T."/>
        </authorList>
    </citation>
    <scope>NUCLEOTIDE SEQUENCE [LARGE SCALE GENOMIC DNA]</scope>
    <source>
        <strain>K12 / W3110 / ATCC 27325 / DSM 5911</strain>
    </source>
</reference>
<reference key="4">
    <citation type="journal article" date="2005" name="Science">
        <title>Global topology analysis of the Escherichia coli inner membrane proteome.</title>
        <authorList>
            <person name="Daley D.O."/>
            <person name="Rapp M."/>
            <person name="Granseth E."/>
            <person name="Melen K."/>
            <person name="Drew D."/>
            <person name="von Heijne G."/>
        </authorList>
    </citation>
    <scope>TOPOLOGY [LARGE SCALE ANALYSIS]</scope>
    <source>
        <strain>K12 / MG1655 / ATCC 47076</strain>
    </source>
</reference>
<feature type="chain" id="PRO_0000166299" description="UPF0126 inner membrane protein YicG">
    <location>
        <begin position="1"/>
        <end position="205"/>
    </location>
</feature>
<feature type="topological domain" description="Cytoplasmic" evidence="1">
    <location>
        <begin position="1"/>
        <end position="29"/>
    </location>
</feature>
<feature type="transmembrane region" description="Helical" evidence="1">
    <location>
        <begin position="30"/>
        <end position="50"/>
    </location>
</feature>
<feature type="topological domain" description="Periplasmic" evidence="1">
    <location>
        <begin position="51"/>
        <end position="64"/>
    </location>
</feature>
<feature type="transmembrane region" description="Helical" evidence="1">
    <location>
        <begin position="65"/>
        <end position="85"/>
    </location>
</feature>
<feature type="topological domain" description="Cytoplasmic" evidence="1">
    <location>
        <begin position="86"/>
        <end position="87"/>
    </location>
</feature>
<feature type="transmembrane region" description="Helical" evidence="1">
    <location>
        <begin position="88"/>
        <end position="108"/>
    </location>
</feature>
<feature type="topological domain" description="Periplasmic" evidence="1">
    <location>
        <begin position="109"/>
        <end position="111"/>
    </location>
</feature>
<feature type="transmembrane region" description="Helical" evidence="1">
    <location>
        <begin position="112"/>
        <end position="132"/>
    </location>
</feature>
<feature type="topological domain" description="Cytoplasmic" evidence="1">
    <location>
        <begin position="133"/>
        <end position="147"/>
    </location>
</feature>
<feature type="transmembrane region" description="Helical" evidence="1">
    <location>
        <begin position="148"/>
        <end position="168"/>
    </location>
</feature>
<feature type="transmembrane region" description="Helical" evidence="1">
    <location>
        <begin position="169"/>
        <end position="189"/>
    </location>
</feature>
<feature type="topological domain" description="Cytoplasmic" evidence="1">
    <location>
        <begin position="190"/>
        <end position="205"/>
    </location>
</feature>
<gene>
    <name type="primary">yicG</name>
    <name type="ordered locus">b3646</name>
    <name type="ordered locus">JW3621</name>
</gene>
<keyword id="KW-0997">Cell inner membrane</keyword>
<keyword id="KW-1003">Cell membrane</keyword>
<keyword id="KW-0472">Membrane</keyword>
<keyword id="KW-1185">Reference proteome</keyword>
<keyword id="KW-0812">Transmembrane</keyword>
<keyword id="KW-1133">Transmembrane helix</keyword>
<sequence length="205" mass="22048">MLLHILYLVGITAEAMTGALAAGRRRMDTFGVIIIATATAIGGGSVRDILLGHYPLGWVKHPEYVIIVATAAVLTTIVAPVMPYLRKVFLVLDALGLVVFSIIGAQVALDMGHGPIIAVVAAVTTGVFGGVLRDMFCKRIPLVFQKELYAGVSFASAVLYIALQHYVSNHDVVIISTLVFGFFARLLALRLKLGLPVFYYSHEGH</sequence>
<accession>P0AGM2</accession>
<accession>P31432</accession>
<accession>P76720</accession>
<accession>Q2M7V9</accession>
<proteinExistence type="evidence at protein level"/>
<evidence type="ECO:0000255" key="1"/>
<evidence type="ECO:0000305" key="2"/>
<dbReference type="EMBL" id="L10328">
    <property type="protein sequence ID" value="AAA61999.1"/>
    <property type="status" value="ALT_INIT"/>
    <property type="molecule type" value="Genomic_DNA"/>
</dbReference>
<dbReference type="EMBL" id="U00096">
    <property type="protein sequence ID" value="AAC76670.2"/>
    <property type="molecule type" value="Genomic_DNA"/>
</dbReference>
<dbReference type="EMBL" id="AP009048">
    <property type="protein sequence ID" value="BAE77647.1"/>
    <property type="molecule type" value="Genomic_DNA"/>
</dbReference>
<dbReference type="PIR" id="H65165">
    <property type="entry name" value="H65165"/>
</dbReference>
<dbReference type="RefSeq" id="NP_418103.4">
    <property type="nucleotide sequence ID" value="NC_000913.3"/>
</dbReference>
<dbReference type="RefSeq" id="WP_000924289.1">
    <property type="nucleotide sequence ID" value="NZ_STEB01000024.1"/>
</dbReference>
<dbReference type="SMR" id="P0AGM2"/>
<dbReference type="BioGRID" id="4262566">
    <property type="interactions" value="5"/>
</dbReference>
<dbReference type="FunCoup" id="P0AGM2">
    <property type="interactions" value="200"/>
</dbReference>
<dbReference type="STRING" id="511145.b3646"/>
<dbReference type="TCDB" id="1.A.62.2.3">
    <property type="family name" value="the homotrimeric cation channel (tric) family"/>
</dbReference>
<dbReference type="PaxDb" id="511145-b3646"/>
<dbReference type="EnsemblBacteria" id="AAC76670">
    <property type="protein sequence ID" value="AAC76670"/>
    <property type="gene ID" value="b3646"/>
</dbReference>
<dbReference type="GeneID" id="948165"/>
<dbReference type="KEGG" id="ecj:JW3621"/>
<dbReference type="KEGG" id="eco:b3646"/>
<dbReference type="KEGG" id="ecoc:C3026_19755"/>
<dbReference type="PATRIC" id="fig|511145.12.peg.3766"/>
<dbReference type="EchoBASE" id="EB1634"/>
<dbReference type="eggNOG" id="COG2860">
    <property type="taxonomic scope" value="Bacteria"/>
</dbReference>
<dbReference type="HOGENOM" id="CLU_064906_2_0_6"/>
<dbReference type="InParanoid" id="P0AGM2"/>
<dbReference type="OMA" id="MPKFDYQ"/>
<dbReference type="OrthoDB" id="9791874at2"/>
<dbReference type="PhylomeDB" id="P0AGM2"/>
<dbReference type="BioCyc" id="EcoCyc:EG11683-MONOMER"/>
<dbReference type="PRO" id="PR:P0AGM2"/>
<dbReference type="Proteomes" id="UP000000625">
    <property type="component" value="Chromosome"/>
</dbReference>
<dbReference type="GO" id="GO:0005886">
    <property type="term" value="C:plasma membrane"/>
    <property type="evidence" value="ECO:0000314"/>
    <property type="project" value="EcoCyc"/>
</dbReference>
<dbReference type="InterPro" id="IPR005115">
    <property type="entry name" value="Gly_transporter"/>
</dbReference>
<dbReference type="PANTHER" id="PTHR30506">
    <property type="entry name" value="INNER MEMBRANE PROTEIN"/>
    <property type="match status" value="1"/>
</dbReference>
<dbReference type="PANTHER" id="PTHR30506:SF3">
    <property type="entry name" value="UPF0126 INNER MEMBRANE PROTEIN YADS-RELATED"/>
    <property type="match status" value="1"/>
</dbReference>
<dbReference type="Pfam" id="PF03458">
    <property type="entry name" value="Gly_transporter"/>
    <property type="match status" value="2"/>
</dbReference>
<organism>
    <name type="scientific">Escherichia coli (strain K12)</name>
    <dbReference type="NCBI Taxonomy" id="83333"/>
    <lineage>
        <taxon>Bacteria</taxon>
        <taxon>Pseudomonadati</taxon>
        <taxon>Pseudomonadota</taxon>
        <taxon>Gammaproteobacteria</taxon>
        <taxon>Enterobacterales</taxon>
        <taxon>Enterobacteriaceae</taxon>
        <taxon>Escherichia</taxon>
    </lineage>
</organism>
<name>YICG_ECOLI</name>
<protein>
    <recommendedName>
        <fullName>UPF0126 inner membrane protein YicG</fullName>
    </recommendedName>
</protein>